<name>NDHI_LACSA</name>
<protein>
    <recommendedName>
        <fullName evidence="1">NAD(P)H-quinone oxidoreductase subunit I, chloroplastic</fullName>
        <ecNumber evidence="1">7.1.1.-</ecNumber>
    </recommendedName>
    <alternativeName>
        <fullName evidence="1">NAD(P)H dehydrogenase subunit I</fullName>
        <shortName evidence="1">NDH subunit I</shortName>
    </alternativeName>
    <alternativeName>
        <fullName evidence="1">NADH-plastoquinone oxidoreductase subunit I</fullName>
    </alternativeName>
</protein>
<proteinExistence type="inferred from homology"/>
<reference key="1">
    <citation type="journal article" date="2006" name="Transgenic Res.">
        <title>Efficient and stable transformation of Lactuca sativa L. cv. Cisco (lettuce) plastids.</title>
        <authorList>
            <person name="Kanamoto H."/>
            <person name="Yamashita A."/>
            <person name="Asao H."/>
            <person name="Okumura S."/>
            <person name="Takase H."/>
            <person name="Hattori M."/>
            <person name="Yokota A."/>
            <person name="Tomizawa K."/>
        </authorList>
    </citation>
    <scope>NUCLEOTIDE SEQUENCE [LARGE SCALE GENOMIC DNA]</scope>
    <source>
        <strain>cv. Cisco</strain>
    </source>
</reference>
<reference key="2">
    <citation type="submission" date="2006-01" db="EMBL/GenBank/DDBJ databases">
        <title>A comparison of the first two published chloroplast genomes in Asteraceae: Lactuca and Helianthus.</title>
        <authorList>
            <person name="Timme R.E."/>
            <person name="Kuehl J.V."/>
            <person name="Boore J.L."/>
            <person name="Jansen R.K."/>
        </authorList>
    </citation>
    <scope>NUCLEOTIDE SEQUENCE [LARGE SCALE GENOMIC DNA]</scope>
    <source>
        <strain>cv. Salinas</strain>
    </source>
</reference>
<sequence>MFPMVTEFMNYGQQTVRAARYIGQGFMITLSHANRLPVTIQYPYEKLITSERFRGRIHFEFDKCIACEVCVRVCPIDLPVVDWKLETDIRKKRLLNYSIDFGICIFCGNCVEYCPTNCLSMTEEYELSTYDRHELNYNQIALGRLPMSVIDDYTIRTIFNLPEIKT</sequence>
<organism>
    <name type="scientific">Lactuca sativa</name>
    <name type="common">Garden lettuce</name>
    <dbReference type="NCBI Taxonomy" id="4236"/>
    <lineage>
        <taxon>Eukaryota</taxon>
        <taxon>Viridiplantae</taxon>
        <taxon>Streptophyta</taxon>
        <taxon>Embryophyta</taxon>
        <taxon>Tracheophyta</taxon>
        <taxon>Spermatophyta</taxon>
        <taxon>Magnoliopsida</taxon>
        <taxon>eudicotyledons</taxon>
        <taxon>Gunneridae</taxon>
        <taxon>Pentapetalae</taxon>
        <taxon>asterids</taxon>
        <taxon>campanulids</taxon>
        <taxon>Asterales</taxon>
        <taxon>Asteraceae</taxon>
        <taxon>Cichorioideae</taxon>
        <taxon>Cichorieae</taxon>
        <taxon>Lactucinae</taxon>
        <taxon>Lactuca</taxon>
    </lineage>
</organism>
<dbReference type="EC" id="7.1.1.-" evidence="1"/>
<dbReference type="EMBL" id="AP007232">
    <property type="protein sequence ID" value="BAE47649.1"/>
    <property type="molecule type" value="Genomic_DNA"/>
</dbReference>
<dbReference type="EMBL" id="DQ383816">
    <property type="protein sequence ID" value="ABD47284.1"/>
    <property type="molecule type" value="Genomic_DNA"/>
</dbReference>
<dbReference type="RefSeq" id="YP_398382.1">
    <property type="nucleotide sequence ID" value="NC_007578.1"/>
</dbReference>
<dbReference type="SMR" id="Q332S3"/>
<dbReference type="GeneID" id="3772859"/>
<dbReference type="KEGG" id="lsv:3772859"/>
<dbReference type="OrthoDB" id="1845069at2759"/>
<dbReference type="GO" id="GO:0009535">
    <property type="term" value="C:chloroplast thylakoid membrane"/>
    <property type="evidence" value="ECO:0007669"/>
    <property type="project" value="UniProtKB-SubCell"/>
</dbReference>
<dbReference type="GO" id="GO:0051539">
    <property type="term" value="F:4 iron, 4 sulfur cluster binding"/>
    <property type="evidence" value="ECO:0007669"/>
    <property type="project" value="UniProtKB-KW"/>
</dbReference>
<dbReference type="GO" id="GO:0005506">
    <property type="term" value="F:iron ion binding"/>
    <property type="evidence" value="ECO:0007669"/>
    <property type="project" value="UniProtKB-UniRule"/>
</dbReference>
<dbReference type="GO" id="GO:0008137">
    <property type="term" value="F:NADH dehydrogenase (ubiquinone) activity"/>
    <property type="evidence" value="ECO:0007669"/>
    <property type="project" value="InterPro"/>
</dbReference>
<dbReference type="GO" id="GO:0048038">
    <property type="term" value="F:quinone binding"/>
    <property type="evidence" value="ECO:0007669"/>
    <property type="project" value="UniProtKB-KW"/>
</dbReference>
<dbReference type="GO" id="GO:0019684">
    <property type="term" value="P:photosynthesis, light reaction"/>
    <property type="evidence" value="ECO:0007669"/>
    <property type="project" value="UniProtKB-UniRule"/>
</dbReference>
<dbReference type="FunFam" id="3.30.70.3270:FF:000006">
    <property type="entry name" value="NAD(P)H-quinone oxidoreductase subunit I, chloroplastic"/>
    <property type="match status" value="1"/>
</dbReference>
<dbReference type="Gene3D" id="3.30.70.3270">
    <property type="match status" value="1"/>
</dbReference>
<dbReference type="HAMAP" id="MF_01351">
    <property type="entry name" value="NDH1_NuoI"/>
    <property type="match status" value="1"/>
</dbReference>
<dbReference type="InterPro" id="IPR017896">
    <property type="entry name" value="4Fe4S_Fe-S-bd"/>
</dbReference>
<dbReference type="InterPro" id="IPR017900">
    <property type="entry name" value="4Fe4S_Fe_S_CS"/>
</dbReference>
<dbReference type="InterPro" id="IPR010226">
    <property type="entry name" value="NADH_quinone_OxRdtase_chainI"/>
</dbReference>
<dbReference type="InterPro" id="IPR004497">
    <property type="entry name" value="NDHI"/>
</dbReference>
<dbReference type="NCBIfam" id="TIGR00403">
    <property type="entry name" value="ndhI"/>
    <property type="match status" value="1"/>
</dbReference>
<dbReference type="NCBIfam" id="TIGR01971">
    <property type="entry name" value="NuoI"/>
    <property type="match status" value="1"/>
</dbReference>
<dbReference type="NCBIfam" id="NF004537">
    <property type="entry name" value="PRK05888.1-3"/>
    <property type="match status" value="1"/>
</dbReference>
<dbReference type="PANTHER" id="PTHR47275">
    <property type="entry name" value="NAD(P)H-QUINONE OXIDOREDUCTASE SUBUNIT I, CHLOROPLASTIC"/>
    <property type="match status" value="1"/>
</dbReference>
<dbReference type="PANTHER" id="PTHR47275:SF1">
    <property type="entry name" value="NAD(P)H-QUINONE OXIDOREDUCTASE SUBUNIT I, CHLOROPLASTIC"/>
    <property type="match status" value="1"/>
</dbReference>
<dbReference type="Pfam" id="PF00037">
    <property type="entry name" value="Fer4"/>
    <property type="match status" value="2"/>
</dbReference>
<dbReference type="SUPFAM" id="SSF54862">
    <property type="entry name" value="4Fe-4S ferredoxins"/>
    <property type="match status" value="1"/>
</dbReference>
<dbReference type="PROSITE" id="PS00198">
    <property type="entry name" value="4FE4S_FER_1"/>
    <property type="match status" value="2"/>
</dbReference>
<dbReference type="PROSITE" id="PS51379">
    <property type="entry name" value="4FE4S_FER_2"/>
    <property type="match status" value="2"/>
</dbReference>
<evidence type="ECO:0000255" key="1">
    <source>
        <dbReference type="HAMAP-Rule" id="MF_01351"/>
    </source>
</evidence>
<gene>
    <name evidence="1" type="primary">ndhI</name>
</gene>
<accession>Q332S3</accession>
<comment type="function">
    <text evidence="1">NDH shuttles electrons from NAD(P)H:plastoquinone, via FMN and iron-sulfur (Fe-S) centers, to quinones in the photosynthetic chain and possibly in a chloroplast respiratory chain. The immediate electron acceptor for the enzyme in this species is believed to be plastoquinone. Couples the redox reaction to proton translocation, and thus conserves the redox energy in a proton gradient.</text>
</comment>
<comment type="catalytic activity">
    <reaction evidence="1">
        <text>a plastoquinone + NADH + (n+1) H(+)(in) = a plastoquinol + NAD(+) + n H(+)(out)</text>
        <dbReference type="Rhea" id="RHEA:42608"/>
        <dbReference type="Rhea" id="RHEA-COMP:9561"/>
        <dbReference type="Rhea" id="RHEA-COMP:9562"/>
        <dbReference type="ChEBI" id="CHEBI:15378"/>
        <dbReference type="ChEBI" id="CHEBI:17757"/>
        <dbReference type="ChEBI" id="CHEBI:57540"/>
        <dbReference type="ChEBI" id="CHEBI:57945"/>
        <dbReference type="ChEBI" id="CHEBI:62192"/>
    </reaction>
</comment>
<comment type="catalytic activity">
    <reaction evidence="1">
        <text>a plastoquinone + NADPH + (n+1) H(+)(in) = a plastoquinol + NADP(+) + n H(+)(out)</text>
        <dbReference type="Rhea" id="RHEA:42612"/>
        <dbReference type="Rhea" id="RHEA-COMP:9561"/>
        <dbReference type="Rhea" id="RHEA-COMP:9562"/>
        <dbReference type="ChEBI" id="CHEBI:15378"/>
        <dbReference type="ChEBI" id="CHEBI:17757"/>
        <dbReference type="ChEBI" id="CHEBI:57783"/>
        <dbReference type="ChEBI" id="CHEBI:58349"/>
        <dbReference type="ChEBI" id="CHEBI:62192"/>
    </reaction>
</comment>
<comment type="cofactor">
    <cofactor evidence="1">
        <name>[4Fe-4S] cluster</name>
        <dbReference type="ChEBI" id="CHEBI:49883"/>
    </cofactor>
    <text evidence="1">Binds 2 [4Fe-4S] clusters per subunit.</text>
</comment>
<comment type="subunit">
    <text evidence="1">NDH is composed of at least 16 different subunits, 5 of which are encoded in the nucleus.</text>
</comment>
<comment type="subcellular location">
    <subcellularLocation>
        <location evidence="1">Plastid</location>
        <location evidence="1">Chloroplast thylakoid membrane</location>
        <topology evidence="1">Peripheral membrane protein</topology>
    </subcellularLocation>
</comment>
<comment type="similarity">
    <text evidence="1">Belongs to the complex I 23 kDa subunit family.</text>
</comment>
<feature type="chain" id="PRO_0000245663" description="NAD(P)H-quinone oxidoreductase subunit I, chloroplastic">
    <location>
        <begin position="1"/>
        <end position="166"/>
    </location>
</feature>
<feature type="domain" description="4Fe-4S ferredoxin-type 1" evidence="1">
    <location>
        <begin position="55"/>
        <end position="84"/>
    </location>
</feature>
<feature type="domain" description="4Fe-4S ferredoxin-type 2" evidence="1">
    <location>
        <begin position="95"/>
        <end position="124"/>
    </location>
</feature>
<feature type="binding site" evidence="1">
    <location>
        <position position="64"/>
    </location>
    <ligand>
        <name>[4Fe-4S] cluster</name>
        <dbReference type="ChEBI" id="CHEBI:49883"/>
        <label>1</label>
    </ligand>
</feature>
<feature type="binding site" evidence="1">
    <location>
        <position position="67"/>
    </location>
    <ligand>
        <name>[4Fe-4S] cluster</name>
        <dbReference type="ChEBI" id="CHEBI:49883"/>
        <label>1</label>
    </ligand>
</feature>
<feature type="binding site" evidence="1">
    <location>
        <position position="70"/>
    </location>
    <ligand>
        <name>[4Fe-4S] cluster</name>
        <dbReference type="ChEBI" id="CHEBI:49883"/>
        <label>1</label>
    </ligand>
</feature>
<feature type="binding site" evidence="1">
    <location>
        <position position="74"/>
    </location>
    <ligand>
        <name>[4Fe-4S] cluster</name>
        <dbReference type="ChEBI" id="CHEBI:49883"/>
        <label>2</label>
    </ligand>
</feature>
<feature type="binding site" evidence="1">
    <location>
        <position position="104"/>
    </location>
    <ligand>
        <name>[4Fe-4S] cluster</name>
        <dbReference type="ChEBI" id="CHEBI:49883"/>
        <label>2</label>
    </ligand>
</feature>
<feature type="binding site" evidence="1">
    <location>
        <position position="107"/>
    </location>
    <ligand>
        <name>[4Fe-4S] cluster</name>
        <dbReference type="ChEBI" id="CHEBI:49883"/>
        <label>2</label>
    </ligand>
</feature>
<feature type="binding site" evidence="1">
    <location>
        <position position="110"/>
    </location>
    <ligand>
        <name>[4Fe-4S] cluster</name>
        <dbReference type="ChEBI" id="CHEBI:49883"/>
        <label>2</label>
    </ligand>
</feature>
<feature type="binding site" evidence="1">
    <location>
        <position position="114"/>
    </location>
    <ligand>
        <name>[4Fe-4S] cluster</name>
        <dbReference type="ChEBI" id="CHEBI:49883"/>
        <label>1</label>
    </ligand>
</feature>
<keyword id="KW-0004">4Fe-4S</keyword>
<keyword id="KW-0150">Chloroplast</keyword>
<keyword id="KW-0408">Iron</keyword>
<keyword id="KW-0411">Iron-sulfur</keyword>
<keyword id="KW-0472">Membrane</keyword>
<keyword id="KW-0479">Metal-binding</keyword>
<keyword id="KW-0520">NAD</keyword>
<keyword id="KW-0521">NADP</keyword>
<keyword id="KW-0934">Plastid</keyword>
<keyword id="KW-0618">Plastoquinone</keyword>
<keyword id="KW-0874">Quinone</keyword>
<keyword id="KW-0677">Repeat</keyword>
<keyword id="KW-0793">Thylakoid</keyword>
<keyword id="KW-1278">Translocase</keyword>
<geneLocation type="chloroplast"/>